<reference key="1">
    <citation type="journal article" date="2004" name="Genome Res.">
        <title>The status, quality, and expansion of the NIH full-length cDNA project: the Mammalian Gene Collection (MGC).</title>
        <authorList>
            <consortium name="The MGC Project Team"/>
        </authorList>
    </citation>
    <scope>NUCLEOTIDE SEQUENCE [LARGE SCALE MRNA]</scope>
    <source>
        <tissue>Testis</tissue>
    </source>
</reference>
<reference key="2">
    <citation type="journal article" date="2012" name="Nat. Commun.">
        <title>Quantitative maps of protein phosphorylation sites across 14 different rat organs and tissues.</title>
        <authorList>
            <person name="Lundby A."/>
            <person name="Secher A."/>
            <person name="Lage K."/>
            <person name="Nordsborg N.B."/>
            <person name="Dmytriyev A."/>
            <person name="Lundby C."/>
            <person name="Olsen J.V."/>
        </authorList>
    </citation>
    <scope>PHOSPHORYLATION [LARGE SCALE ANALYSIS] AT SER-12 AND THR-110</scope>
    <scope>IDENTIFICATION BY MASS SPECTROMETRY [LARGE SCALE ANALYSIS]</scope>
</reference>
<organism>
    <name type="scientific">Rattus norvegicus</name>
    <name type="common">Rat</name>
    <dbReference type="NCBI Taxonomy" id="10116"/>
    <lineage>
        <taxon>Eukaryota</taxon>
        <taxon>Metazoa</taxon>
        <taxon>Chordata</taxon>
        <taxon>Craniata</taxon>
        <taxon>Vertebrata</taxon>
        <taxon>Euteleostomi</taxon>
        <taxon>Mammalia</taxon>
        <taxon>Eutheria</taxon>
        <taxon>Euarchontoglires</taxon>
        <taxon>Glires</taxon>
        <taxon>Rodentia</taxon>
        <taxon>Myomorpha</taxon>
        <taxon>Muroidea</taxon>
        <taxon>Muridae</taxon>
        <taxon>Murinae</taxon>
        <taxon>Rattus</taxon>
    </lineage>
</organism>
<dbReference type="EMBL" id="BC127509">
    <property type="protein sequence ID" value="AAI27510.1"/>
    <property type="molecule type" value="mRNA"/>
</dbReference>
<dbReference type="RefSeq" id="NP_001071138.1">
    <property type="nucleotide sequence ID" value="NM_001077670.1"/>
</dbReference>
<dbReference type="SMR" id="A0JPM9"/>
<dbReference type="FunCoup" id="A0JPM9">
    <property type="interactions" value="3466"/>
</dbReference>
<dbReference type="STRING" id="10116.ENSRNOP00000022437"/>
<dbReference type="iPTMnet" id="A0JPM9"/>
<dbReference type="PhosphoSitePlus" id="A0JPM9"/>
<dbReference type="jPOST" id="A0JPM9"/>
<dbReference type="PaxDb" id="10116-ENSRNOP00000022437"/>
<dbReference type="PeptideAtlas" id="A0JPM9"/>
<dbReference type="GeneID" id="691947"/>
<dbReference type="KEGG" id="rno:691947"/>
<dbReference type="UCSC" id="RGD:1593338">
    <property type="organism name" value="rat"/>
</dbReference>
<dbReference type="AGR" id="RGD:1593338"/>
<dbReference type="CTD" id="8669"/>
<dbReference type="RGD" id="1593338">
    <property type="gene designation" value="Eif3j"/>
</dbReference>
<dbReference type="VEuPathDB" id="HostDB:ENSRNOG00000016459"/>
<dbReference type="eggNOG" id="KOG4813">
    <property type="taxonomic scope" value="Eukaryota"/>
</dbReference>
<dbReference type="HOGENOM" id="CLU_085806_2_1_1"/>
<dbReference type="InParanoid" id="A0JPM9"/>
<dbReference type="OrthoDB" id="20381at2759"/>
<dbReference type="PhylomeDB" id="A0JPM9"/>
<dbReference type="Reactome" id="R-RNO-156827">
    <property type="pathway name" value="L13a-mediated translational silencing of Ceruloplasmin expression"/>
</dbReference>
<dbReference type="Reactome" id="R-RNO-72649">
    <property type="pathway name" value="Translation initiation complex formation"/>
</dbReference>
<dbReference type="Reactome" id="R-RNO-72689">
    <property type="pathway name" value="Formation of a pool of free 40S subunits"/>
</dbReference>
<dbReference type="Reactome" id="R-RNO-72695">
    <property type="pathway name" value="Formation of the ternary complex, and subsequently, the 43S complex"/>
</dbReference>
<dbReference type="Reactome" id="R-RNO-72702">
    <property type="pathway name" value="Ribosomal scanning and start codon recognition"/>
</dbReference>
<dbReference type="PRO" id="PR:A0JPM9"/>
<dbReference type="Proteomes" id="UP000002494">
    <property type="component" value="Chromosome 3"/>
</dbReference>
<dbReference type="Bgee" id="ENSRNOG00000016459">
    <property type="expression patterns" value="Expressed in quadriceps femoris and 20 other cell types or tissues"/>
</dbReference>
<dbReference type="GO" id="GO:0005829">
    <property type="term" value="C:cytosol"/>
    <property type="evidence" value="ECO:0007669"/>
    <property type="project" value="Ensembl"/>
</dbReference>
<dbReference type="GO" id="GO:0016282">
    <property type="term" value="C:eukaryotic 43S preinitiation complex"/>
    <property type="evidence" value="ECO:0007669"/>
    <property type="project" value="UniProtKB-UniRule"/>
</dbReference>
<dbReference type="GO" id="GO:0033290">
    <property type="term" value="C:eukaryotic 48S preinitiation complex"/>
    <property type="evidence" value="ECO:0007669"/>
    <property type="project" value="UniProtKB-UniRule"/>
</dbReference>
<dbReference type="GO" id="GO:0005852">
    <property type="term" value="C:eukaryotic translation initiation factor 3 complex"/>
    <property type="evidence" value="ECO:0000250"/>
    <property type="project" value="UniProtKB"/>
</dbReference>
<dbReference type="GO" id="GO:0042802">
    <property type="term" value="F:identical protein binding"/>
    <property type="evidence" value="ECO:0000266"/>
    <property type="project" value="RGD"/>
</dbReference>
<dbReference type="GO" id="GO:0003743">
    <property type="term" value="F:translation initiation factor activity"/>
    <property type="evidence" value="ECO:0007669"/>
    <property type="project" value="UniProtKB-UniRule"/>
</dbReference>
<dbReference type="GO" id="GO:0001732">
    <property type="term" value="P:formation of cytoplasmic translation initiation complex"/>
    <property type="evidence" value="ECO:0007669"/>
    <property type="project" value="UniProtKB-UniRule"/>
</dbReference>
<dbReference type="FunFam" id="1.10.246.60:FF:000001">
    <property type="entry name" value="Eukaryotic translation initiation factor 3 subunit J"/>
    <property type="match status" value="1"/>
</dbReference>
<dbReference type="Gene3D" id="1.10.246.60">
    <property type="entry name" value="Eukaryotic translation initiation factor 3 like domains"/>
    <property type="match status" value="1"/>
</dbReference>
<dbReference type="HAMAP" id="MF_03009">
    <property type="entry name" value="eIF3j"/>
    <property type="match status" value="1"/>
</dbReference>
<dbReference type="InterPro" id="IPR023194">
    <property type="entry name" value="eIF3-like_dom_sf"/>
</dbReference>
<dbReference type="InterPro" id="IPR013906">
    <property type="entry name" value="eIF3j"/>
</dbReference>
<dbReference type="PANTHER" id="PTHR21681">
    <property type="entry name" value="EUKARYOTIC TRANSLATION INITIATION FACTOR 3 SUBUNIT J"/>
    <property type="match status" value="1"/>
</dbReference>
<dbReference type="PANTHER" id="PTHR21681:SF0">
    <property type="entry name" value="EUKARYOTIC TRANSLATION INITIATION FACTOR 3 SUBUNIT J"/>
    <property type="match status" value="1"/>
</dbReference>
<dbReference type="Pfam" id="PF08597">
    <property type="entry name" value="eIF3_subunit"/>
    <property type="match status" value="1"/>
</dbReference>
<feature type="chain" id="PRO_0000329452" description="Eukaryotic translation initiation factor 3 subunit J">
    <location>
        <begin position="1"/>
        <end position="259"/>
    </location>
</feature>
<feature type="region of interest" description="Disordered" evidence="3">
    <location>
        <begin position="1"/>
        <end position="111"/>
    </location>
</feature>
<feature type="region of interest" description="Sufficient for interaction with EIF3B" evidence="2">
    <location>
        <begin position="1"/>
        <end position="70"/>
    </location>
</feature>
<feature type="region of interest" description="Disordered" evidence="3">
    <location>
        <begin position="218"/>
        <end position="247"/>
    </location>
</feature>
<feature type="region of interest" description="Promotes stable association with the 40S ribosome" evidence="2">
    <location>
        <begin position="244"/>
        <end position="259"/>
    </location>
</feature>
<feature type="coiled-coil region" evidence="2">
    <location>
        <begin position="71"/>
        <end position="136"/>
    </location>
</feature>
<feature type="compositionally biased region" description="Acidic residues" evidence="3">
    <location>
        <begin position="41"/>
        <end position="62"/>
    </location>
</feature>
<feature type="compositionally biased region" description="Basic and acidic residues" evidence="3">
    <location>
        <begin position="63"/>
        <end position="107"/>
    </location>
</feature>
<feature type="modified residue" description="Phosphoserine" evidence="4">
    <location>
        <position position="12"/>
    </location>
</feature>
<feature type="modified residue" description="Phosphoserine" evidence="1 2">
    <location>
        <position position="14"/>
    </location>
</feature>
<feature type="modified residue" description="Phosphoserine" evidence="1 2">
    <location>
        <position position="21"/>
    </location>
</feature>
<feature type="modified residue" description="Phosphothreonine" evidence="4">
    <location>
        <position position="110"/>
    </location>
</feature>
<feature type="modified residue" description="Phosphoserine" evidence="1 2">
    <location>
        <position position="128"/>
    </location>
</feature>
<feature type="modified residue" description="Phosphotyrosine" evidence="1">
    <location>
        <position position="255"/>
    </location>
</feature>
<feature type="cross-link" description="Glycyl lysine isopeptide (Lys-Gly) (interchain with G-Cter in SUMO2)" evidence="1">
    <location>
        <position position="107"/>
    </location>
</feature>
<name>EIF3J_RAT</name>
<keyword id="KW-0175">Coiled coil</keyword>
<keyword id="KW-0963">Cytoplasm</keyword>
<keyword id="KW-0396">Initiation factor</keyword>
<keyword id="KW-1017">Isopeptide bond</keyword>
<keyword id="KW-0597">Phosphoprotein</keyword>
<keyword id="KW-0648">Protein biosynthesis</keyword>
<keyword id="KW-1185">Reference proteome</keyword>
<keyword id="KW-0832">Ubl conjugation</keyword>
<protein>
    <recommendedName>
        <fullName evidence="2">Eukaryotic translation initiation factor 3 subunit J</fullName>
        <shortName evidence="2">eIF3j</shortName>
    </recommendedName>
    <alternativeName>
        <fullName evidence="2">Eukaryotic translation initiation factor 3 subunit 1</fullName>
    </alternativeName>
    <alternativeName>
        <fullName evidence="2">eIF-3-alpha</fullName>
    </alternativeName>
    <alternativeName>
        <fullName evidence="2">eIF3 p35</fullName>
    </alternativeName>
</protein>
<comment type="function">
    <text evidence="2">Component of the eukaryotic translation initiation factor 3 (eIF-3) complex, which is required for several steps in the initiation of protein synthesis. The eIF-3 complex associates with the 40S ribosome and facilitates the recruitment of eIF-1, eIF-1A, eIF-2:GTP:methionyl-tRNAi and eIF-5 to form the 43S pre-initiation complex (43S PIC). The eIF-3 complex stimulates mRNA recruitment to the 43S PIC and scanning of the mRNA for AUG recognition. The eIF-3 complex is also required for disassembly and recycling of post-termination ribosomal complexes and subsequently prevents premature joining of the 40S and 60S ribosomal subunits prior to initiation. The eIF-3 complex specifically targets and initiates translation of a subset of mRNAs involved in cell proliferation, including cell cycling, differentiation and apoptosis, and uses different modes of RNA stem-loop binding to exert either translational activation or repression. This subunit binds directly within the mRNA entry channel of the 40S ribosome to the aminoacyl (A) site. It may regulate the interaction between the 43S PIC and mRNA.</text>
</comment>
<comment type="subunit">
    <text evidence="2">Component of the eukaryotic translation initiation factor 3 (eIF-3) complex, which is composed of 13 subunits: EIF3A, EIF3B, EIF3C, EIF3D, EIF3E, EIF3F, EIF3G, EIF3H, EIF3I, EIF3J, EIF3K, EIF3L and EIF3M. The eIF-3 complex appears to include 3 stable modules: module A is composed of EIF3A, EIF3B, EIF3G and EIF3I; module B is composed of EIF3F, EIF3H, and EIF3M; and module C is composed of EIF3C, EIF3D, EIF3E, EIF3K and EIF3L. EIF3C of module C binds EIF3B of module A and EIF3H of module B, thereby linking the three modules. EIF3J is a labile subunit that binds to the eIF-3 complex via EIF3B. The eIF-3 complex interacts with RPS6KB1 under conditions of nutrient depletion. Mitogenic stimulation leads to binding and activation of a complex composed of MTOR and RPTOR, leading to phosphorylation and release of RPS6KB1 and binding of EIF4B to eIF-3.</text>
</comment>
<comment type="subcellular location">
    <subcellularLocation>
        <location evidence="2">Cytoplasm</location>
    </subcellularLocation>
</comment>
<comment type="PTM">
    <text evidence="2">Phosphorylated. Phosphorylation is enhanced upon serum stimulation.</text>
</comment>
<comment type="similarity">
    <text evidence="2">Belongs to the eIF-3 subunit J family.</text>
</comment>
<gene>
    <name type="primary">Eif3j</name>
    <name type="synonym">Eif3s1</name>
</gene>
<sequence>MAAAAAAAAGDSDSWDADTFSMEDPVRKVAGGGTAGGDRWEGEDEDEDVKDNWDDDDDENKEEAEVKPEVKISEKKKIAEKIKEKERQQKKRQEEIKKRLEEPEESKVLTPEEQLADKLRLKKLQEESDLELAKETFGVNNTVYGIDAMNPSSRDDFTEFGKLLKDKITQYEKSLYYASFLEALVRDVCISLEIDDLKKITNSLTVLCSEKQKQEKQSKAKKKKKGVVPGGGLKATMKDDLADYGGYDGGYVQDYEDFM</sequence>
<accession>A0JPM9</accession>
<proteinExistence type="evidence at protein level"/>
<evidence type="ECO:0000250" key="1">
    <source>
        <dbReference type="UniProtKB" id="O75822"/>
    </source>
</evidence>
<evidence type="ECO:0000255" key="2">
    <source>
        <dbReference type="HAMAP-Rule" id="MF_03009"/>
    </source>
</evidence>
<evidence type="ECO:0000256" key="3">
    <source>
        <dbReference type="SAM" id="MobiDB-lite"/>
    </source>
</evidence>
<evidence type="ECO:0007744" key="4">
    <source>
    </source>
</evidence>